<evidence type="ECO:0000255" key="1">
    <source>
        <dbReference type="PROSITE-ProRule" id="PRU00108"/>
    </source>
</evidence>
<evidence type="ECO:0000256" key="2">
    <source>
        <dbReference type="SAM" id="MobiDB-lite"/>
    </source>
</evidence>
<evidence type="ECO:0000269" key="3">
    <source>
    </source>
</evidence>
<evidence type="ECO:0000305" key="4"/>
<accession>P28357</accession>
<accession>A2ASM9</accession>
<accession>Q3UMQ3</accession>
<accession>Q3UYS2</accession>
<comment type="function">
    <text>Sequence-specific transcription factor which is part of a developmental regulatory system that provides cells with specific positional identities on the anterior-posterior axis.</text>
</comment>
<comment type="subcellular location">
    <subcellularLocation>
        <location>Nucleus</location>
    </subcellularLocation>
</comment>
<comment type="developmental stage">
    <text evidence="3">Expressed in the developing limb buds. Expressed in the posterior-most regions of the fetus. Strongly expressed in 12.5 day old fetuses in both spinal cord and pre-vertebral column with an anterior boundary of expression lying at the level of the first lumbar pre-vertebrae.</text>
</comment>
<comment type="similarity">
    <text evidence="4">Belongs to the Abd-B homeobox family.</text>
</comment>
<keyword id="KW-0217">Developmental protein</keyword>
<keyword id="KW-0238">DNA-binding</keyword>
<keyword id="KW-0371">Homeobox</keyword>
<keyword id="KW-0539">Nucleus</keyword>
<keyword id="KW-1185">Reference proteome</keyword>
<keyword id="KW-0804">Transcription</keyword>
<keyword id="KW-0805">Transcription regulation</keyword>
<proteinExistence type="evidence at transcript level"/>
<feature type="chain" id="PRO_0000200221" description="Homeobox protein Hox-D9">
    <location>
        <begin position="1"/>
        <end position="339"/>
    </location>
</feature>
<feature type="DNA-binding region" description="Homeobox" evidence="1">
    <location>
        <begin position="272"/>
        <end position="331"/>
    </location>
</feature>
<feature type="region of interest" description="Disordered" evidence="2">
    <location>
        <begin position="114"/>
        <end position="198"/>
    </location>
</feature>
<feature type="region of interest" description="Disordered" evidence="2">
    <location>
        <begin position="211"/>
        <end position="263"/>
    </location>
</feature>
<feature type="compositionally biased region" description="Gly residues" evidence="2">
    <location>
        <begin position="114"/>
        <end position="132"/>
    </location>
</feature>
<feature type="compositionally biased region" description="Low complexity" evidence="2">
    <location>
        <begin position="155"/>
        <end position="176"/>
    </location>
</feature>
<feature type="compositionally biased region" description="Gly residues" evidence="2">
    <location>
        <begin position="211"/>
        <end position="223"/>
    </location>
</feature>
<dbReference type="EMBL" id="X62669">
    <property type="protein sequence ID" value="CAA44542.1"/>
    <property type="molecule type" value="Genomic_DNA"/>
</dbReference>
<dbReference type="EMBL" id="AK134427">
    <property type="protein sequence ID" value="BAE22140.1"/>
    <property type="molecule type" value="mRNA"/>
</dbReference>
<dbReference type="EMBL" id="AK144746">
    <property type="protein sequence ID" value="BAE26045.1"/>
    <property type="molecule type" value="mRNA"/>
</dbReference>
<dbReference type="EMBL" id="AL928644">
    <property type="status" value="NOT_ANNOTATED_CDS"/>
    <property type="molecule type" value="Genomic_DNA"/>
</dbReference>
<dbReference type="EMBL" id="BC019150">
    <property type="protein sequence ID" value="AAH19150.1"/>
    <property type="molecule type" value="mRNA"/>
</dbReference>
<dbReference type="EMBL" id="X14714">
    <property type="protein sequence ID" value="CAB57813.1"/>
    <property type="molecule type" value="Genomic_DNA"/>
</dbReference>
<dbReference type="CCDS" id="CCDS16142.1"/>
<dbReference type="PIR" id="S20880">
    <property type="entry name" value="S20880"/>
</dbReference>
<dbReference type="RefSeq" id="NP_038583.1">
    <property type="nucleotide sequence ID" value="NM_013555.4"/>
</dbReference>
<dbReference type="BMRB" id="P28357"/>
<dbReference type="SMR" id="P28357"/>
<dbReference type="BioGRID" id="200399">
    <property type="interactions" value="3"/>
</dbReference>
<dbReference type="FunCoup" id="P28357">
    <property type="interactions" value="817"/>
</dbReference>
<dbReference type="IntAct" id="P28357">
    <property type="interactions" value="3"/>
</dbReference>
<dbReference type="STRING" id="10090.ENSMUSP00000058490"/>
<dbReference type="PhosphoSitePlus" id="P28357"/>
<dbReference type="PaxDb" id="10090-ENSMUSP00000058490"/>
<dbReference type="ProteomicsDB" id="273288"/>
<dbReference type="Pumba" id="P28357"/>
<dbReference type="Antibodypedia" id="33907">
    <property type="antibodies" value="212 antibodies from 28 providers"/>
</dbReference>
<dbReference type="DNASU" id="15438"/>
<dbReference type="Ensembl" id="ENSMUST00000059272.10">
    <property type="protein sequence ID" value="ENSMUSP00000058490.9"/>
    <property type="gene ID" value="ENSMUSG00000043342.10"/>
</dbReference>
<dbReference type="GeneID" id="15438"/>
<dbReference type="KEGG" id="mmu:15438"/>
<dbReference type="UCSC" id="uc008kdz.1">
    <property type="organism name" value="mouse"/>
</dbReference>
<dbReference type="AGR" id="MGI:96210"/>
<dbReference type="CTD" id="3235"/>
<dbReference type="MGI" id="MGI:96210">
    <property type="gene designation" value="Hoxd9"/>
</dbReference>
<dbReference type="VEuPathDB" id="HostDB:ENSMUSG00000043342"/>
<dbReference type="eggNOG" id="KOG0487">
    <property type="taxonomic scope" value="Eukaryota"/>
</dbReference>
<dbReference type="GeneTree" id="ENSGT00940000161503"/>
<dbReference type="HOGENOM" id="CLU_071854_0_0_1"/>
<dbReference type="InParanoid" id="P28357"/>
<dbReference type="OMA" id="MRSWMEP"/>
<dbReference type="OrthoDB" id="6159439at2759"/>
<dbReference type="PhylomeDB" id="P28357"/>
<dbReference type="TreeFam" id="TF317819"/>
<dbReference type="BioGRID-ORCS" id="15438">
    <property type="hits" value="1 hit in 79 CRISPR screens"/>
</dbReference>
<dbReference type="ChiTaRS" id="Hoxd9">
    <property type="organism name" value="mouse"/>
</dbReference>
<dbReference type="PRO" id="PR:P28357"/>
<dbReference type="Proteomes" id="UP000000589">
    <property type="component" value="Chromosome 2"/>
</dbReference>
<dbReference type="RNAct" id="P28357">
    <property type="molecule type" value="protein"/>
</dbReference>
<dbReference type="Bgee" id="ENSMUSG00000043342">
    <property type="expression patterns" value="Expressed in gonadal ridge and 149 other cell types or tissues"/>
</dbReference>
<dbReference type="GO" id="GO:0005730">
    <property type="term" value="C:nucleolus"/>
    <property type="evidence" value="ECO:0007669"/>
    <property type="project" value="Ensembl"/>
</dbReference>
<dbReference type="GO" id="GO:0005654">
    <property type="term" value="C:nucleoplasm"/>
    <property type="evidence" value="ECO:0007669"/>
    <property type="project" value="Ensembl"/>
</dbReference>
<dbReference type="GO" id="GO:0005634">
    <property type="term" value="C:nucleus"/>
    <property type="evidence" value="ECO:0000314"/>
    <property type="project" value="MGI"/>
</dbReference>
<dbReference type="GO" id="GO:0003677">
    <property type="term" value="F:DNA binding"/>
    <property type="evidence" value="ECO:0000314"/>
    <property type="project" value="MGI"/>
</dbReference>
<dbReference type="GO" id="GO:0003700">
    <property type="term" value="F:DNA-binding transcription factor activity"/>
    <property type="evidence" value="ECO:0000314"/>
    <property type="project" value="MGI"/>
</dbReference>
<dbReference type="GO" id="GO:0001227">
    <property type="term" value="F:DNA-binding transcription repressor activity, RNA polymerase II-specific"/>
    <property type="evidence" value="ECO:0007669"/>
    <property type="project" value="Ensembl"/>
</dbReference>
<dbReference type="GO" id="GO:0000977">
    <property type="term" value="F:RNA polymerase II transcription regulatory region sequence-specific DNA binding"/>
    <property type="evidence" value="ECO:0007669"/>
    <property type="project" value="Ensembl"/>
</dbReference>
<dbReference type="GO" id="GO:0008344">
    <property type="term" value="P:adult locomotory behavior"/>
    <property type="evidence" value="ECO:0000316"/>
    <property type="project" value="MGI"/>
</dbReference>
<dbReference type="GO" id="GO:0009952">
    <property type="term" value="P:anterior/posterior pattern specification"/>
    <property type="evidence" value="ECO:0000315"/>
    <property type="project" value="MGI"/>
</dbReference>
<dbReference type="GO" id="GO:0006351">
    <property type="term" value="P:DNA-templated transcription"/>
    <property type="evidence" value="ECO:0007669"/>
    <property type="project" value="InterPro"/>
</dbReference>
<dbReference type="GO" id="GO:0035115">
    <property type="term" value="P:embryonic forelimb morphogenesis"/>
    <property type="evidence" value="ECO:0000315"/>
    <property type="project" value="MGI"/>
</dbReference>
<dbReference type="GO" id="GO:0048706">
    <property type="term" value="P:embryonic skeletal system development"/>
    <property type="evidence" value="ECO:0000315"/>
    <property type="project" value="MGI"/>
</dbReference>
<dbReference type="GO" id="GO:0048704">
    <property type="term" value="P:embryonic skeletal system morphogenesis"/>
    <property type="evidence" value="ECO:0000316"/>
    <property type="project" value="MGI"/>
</dbReference>
<dbReference type="GO" id="GO:0035136">
    <property type="term" value="P:forelimb morphogenesis"/>
    <property type="evidence" value="ECO:0000316"/>
    <property type="project" value="MGI"/>
</dbReference>
<dbReference type="GO" id="GO:0035137">
    <property type="term" value="P:hindlimb morphogenesis"/>
    <property type="evidence" value="ECO:0000316"/>
    <property type="project" value="MGI"/>
</dbReference>
<dbReference type="GO" id="GO:0030879">
    <property type="term" value="P:mammary gland development"/>
    <property type="evidence" value="ECO:0000316"/>
    <property type="project" value="MGI"/>
</dbReference>
<dbReference type="GO" id="GO:0048935">
    <property type="term" value="P:peripheral nervous system neuron development"/>
    <property type="evidence" value="ECO:0000316"/>
    <property type="project" value="MGI"/>
</dbReference>
<dbReference type="GO" id="GO:0045944">
    <property type="term" value="P:positive regulation of transcription by RNA polymerase II"/>
    <property type="evidence" value="ECO:0000314"/>
    <property type="project" value="MGI"/>
</dbReference>
<dbReference type="GO" id="GO:0009954">
    <property type="term" value="P:proximal/distal pattern formation"/>
    <property type="evidence" value="ECO:0000315"/>
    <property type="project" value="MGI"/>
</dbReference>
<dbReference type="GO" id="GO:0010468">
    <property type="term" value="P:regulation of gene expression"/>
    <property type="evidence" value="ECO:0000316"/>
    <property type="project" value="MGI"/>
</dbReference>
<dbReference type="GO" id="GO:0007338">
    <property type="term" value="P:single fertilization"/>
    <property type="evidence" value="ECO:0000316"/>
    <property type="project" value="MGI"/>
</dbReference>
<dbReference type="GO" id="GO:0007519">
    <property type="term" value="P:skeletal muscle tissue development"/>
    <property type="evidence" value="ECO:0000316"/>
    <property type="project" value="MGI"/>
</dbReference>
<dbReference type="CDD" id="cd00086">
    <property type="entry name" value="homeodomain"/>
    <property type="match status" value="1"/>
</dbReference>
<dbReference type="FunFam" id="1.10.10.60:FF:000018">
    <property type="entry name" value="Homeobox A10"/>
    <property type="match status" value="1"/>
</dbReference>
<dbReference type="Gene3D" id="1.10.10.60">
    <property type="entry name" value="Homeodomain-like"/>
    <property type="match status" value="1"/>
</dbReference>
<dbReference type="InterPro" id="IPR050803">
    <property type="entry name" value="Abd-B_homeobox_TF"/>
</dbReference>
<dbReference type="InterPro" id="IPR001356">
    <property type="entry name" value="HD"/>
</dbReference>
<dbReference type="InterPro" id="IPR020479">
    <property type="entry name" value="HD_metazoa"/>
</dbReference>
<dbReference type="InterPro" id="IPR017970">
    <property type="entry name" value="Homeobox_CS"/>
</dbReference>
<dbReference type="InterPro" id="IPR009057">
    <property type="entry name" value="Homeodomain-like_sf"/>
</dbReference>
<dbReference type="InterPro" id="IPR006711">
    <property type="entry name" value="Hox9_activation_N"/>
</dbReference>
<dbReference type="PANTHER" id="PTHR45970">
    <property type="entry name" value="AGAP004664-PA"/>
    <property type="match status" value="1"/>
</dbReference>
<dbReference type="PANTHER" id="PTHR45970:SF4">
    <property type="entry name" value="HOMEOBOX PROTEIN HOX-D9"/>
    <property type="match status" value="1"/>
</dbReference>
<dbReference type="Pfam" id="PF00046">
    <property type="entry name" value="Homeodomain"/>
    <property type="match status" value="1"/>
</dbReference>
<dbReference type="Pfam" id="PF04617">
    <property type="entry name" value="Hox9_act"/>
    <property type="match status" value="1"/>
</dbReference>
<dbReference type="PRINTS" id="PR00024">
    <property type="entry name" value="HOMEOBOX"/>
</dbReference>
<dbReference type="SMART" id="SM00389">
    <property type="entry name" value="HOX"/>
    <property type="match status" value="1"/>
</dbReference>
<dbReference type="SUPFAM" id="SSF46689">
    <property type="entry name" value="Homeodomain-like"/>
    <property type="match status" value="1"/>
</dbReference>
<dbReference type="PROSITE" id="PS00027">
    <property type="entry name" value="HOMEOBOX_1"/>
    <property type="match status" value="1"/>
</dbReference>
<dbReference type="PROSITE" id="PS50071">
    <property type="entry name" value="HOMEOBOX_2"/>
    <property type="match status" value="1"/>
</dbReference>
<reference key="1">
    <citation type="journal article" date="1992" name="EMBO J.">
        <title>Comparison of mouse and human HOX-4 complexes defines conserved sequences involved in the regulation of Hox-4.4.</title>
        <authorList>
            <person name="Renucci A.G.P."/>
            <person name="Zappavigna V."/>
            <person name="Zakany J."/>
            <person name="Izpisua-Belmonte J.-C."/>
            <person name="Buerki K."/>
            <person name="Douboule D."/>
        </authorList>
    </citation>
    <scope>NUCLEOTIDE SEQUENCE [GENOMIC DNA]</scope>
</reference>
<reference key="2">
    <citation type="journal article" date="2005" name="Science">
        <title>The transcriptional landscape of the mammalian genome.</title>
        <authorList>
            <person name="Carninci P."/>
            <person name="Kasukawa T."/>
            <person name="Katayama S."/>
            <person name="Gough J."/>
            <person name="Frith M.C."/>
            <person name="Maeda N."/>
            <person name="Oyama R."/>
            <person name="Ravasi T."/>
            <person name="Lenhard B."/>
            <person name="Wells C."/>
            <person name="Kodzius R."/>
            <person name="Shimokawa K."/>
            <person name="Bajic V.B."/>
            <person name="Brenner S.E."/>
            <person name="Batalov S."/>
            <person name="Forrest A.R."/>
            <person name="Zavolan M."/>
            <person name="Davis M.J."/>
            <person name="Wilming L.G."/>
            <person name="Aidinis V."/>
            <person name="Allen J.E."/>
            <person name="Ambesi-Impiombato A."/>
            <person name="Apweiler R."/>
            <person name="Aturaliya R.N."/>
            <person name="Bailey T.L."/>
            <person name="Bansal M."/>
            <person name="Baxter L."/>
            <person name="Beisel K.W."/>
            <person name="Bersano T."/>
            <person name="Bono H."/>
            <person name="Chalk A.M."/>
            <person name="Chiu K.P."/>
            <person name="Choudhary V."/>
            <person name="Christoffels A."/>
            <person name="Clutterbuck D.R."/>
            <person name="Crowe M.L."/>
            <person name="Dalla E."/>
            <person name="Dalrymple B.P."/>
            <person name="de Bono B."/>
            <person name="Della Gatta G."/>
            <person name="di Bernardo D."/>
            <person name="Down T."/>
            <person name="Engstrom P."/>
            <person name="Fagiolini M."/>
            <person name="Faulkner G."/>
            <person name="Fletcher C.F."/>
            <person name="Fukushima T."/>
            <person name="Furuno M."/>
            <person name="Futaki S."/>
            <person name="Gariboldi M."/>
            <person name="Georgii-Hemming P."/>
            <person name="Gingeras T.R."/>
            <person name="Gojobori T."/>
            <person name="Green R.E."/>
            <person name="Gustincich S."/>
            <person name="Harbers M."/>
            <person name="Hayashi Y."/>
            <person name="Hensch T.K."/>
            <person name="Hirokawa N."/>
            <person name="Hill D."/>
            <person name="Huminiecki L."/>
            <person name="Iacono M."/>
            <person name="Ikeo K."/>
            <person name="Iwama A."/>
            <person name="Ishikawa T."/>
            <person name="Jakt M."/>
            <person name="Kanapin A."/>
            <person name="Katoh M."/>
            <person name="Kawasawa Y."/>
            <person name="Kelso J."/>
            <person name="Kitamura H."/>
            <person name="Kitano H."/>
            <person name="Kollias G."/>
            <person name="Krishnan S.P."/>
            <person name="Kruger A."/>
            <person name="Kummerfeld S.K."/>
            <person name="Kurochkin I.V."/>
            <person name="Lareau L.F."/>
            <person name="Lazarevic D."/>
            <person name="Lipovich L."/>
            <person name="Liu J."/>
            <person name="Liuni S."/>
            <person name="McWilliam S."/>
            <person name="Madan Babu M."/>
            <person name="Madera M."/>
            <person name="Marchionni L."/>
            <person name="Matsuda H."/>
            <person name="Matsuzawa S."/>
            <person name="Miki H."/>
            <person name="Mignone F."/>
            <person name="Miyake S."/>
            <person name="Morris K."/>
            <person name="Mottagui-Tabar S."/>
            <person name="Mulder N."/>
            <person name="Nakano N."/>
            <person name="Nakauchi H."/>
            <person name="Ng P."/>
            <person name="Nilsson R."/>
            <person name="Nishiguchi S."/>
            <person name="Nishikawa S."/>
            <person name="Nori F."/>
            <person name="Ohara O."/>
            <person name="Okazaki Y."/>
            <person name="Orlando V."/>
            <person name="Pang K.C."/>
            <person name="Pavan W.J."/>
            <person name="Pavesi G."/>
            <person name="Pesole G."/>
            <person name="Petrovsky N."/>
            <person name="Piazza S."/>
            <person name="Reed J."/>
            <person name="Reid J.F."/>
            <person name="Ring B.Z."/>
            <person name="Ringwald M."/>
            <person name="Rost B."/>
            <person name="Ruan Y."/>
            <person name="Salzberg S.L."/>
            <person name="Sandelin A."/>
            <person name="Schneider C."/>
            <person name="Schoenbach C."/>
            <person name="Sekiguchi K."/>
            <person name="Semple C.A."/>
            <person name="Seno S."/>
            <person name="Sessa L."/>
            <person name="Sheng Y."/>
            <person name="Shibata Y."/>
            <person name="Shimada H."/>
            <person name="Shimada K."/>
            <person name="Silva D."/>
            <person name="Sinclair B."/>
            <person name="Sperling S."/>
            <person name="Stupka E."/>
            <person name="Sugiura K."/>
            <person name="Sultana R."/>
            <person name="Takenaka Y."/>
            <person name="Taki K."/>
            <person name="Tammoja K."/>
            <person name="Tan S.L."/>
            <person name="Tang S."/>
            <person name="Taylor M.S."/>
            <person name="Tegner J."/>
            <person name="Teichmann S.A."/>
            <person name="Ueda H.R."/>
            <person name="van Nimwegen E."/>
            <person name="Verardo R."/>
            <person name="Wei C.L."/>
            <person name="Yagi K."/>
            <person name="Yamanishi H."/>
            <person name="Zabarovsky E."/>
            <person name="Zhu S."/>
            <person name="Zimmer A."/>
            <person name="Hide W."/>
            <person name="Bult C."/>
            <person name="Grimmond S.M."/>
            <person name="Teasdale R.D."/>
            <person name="Liu E.T."/>
            <person name="Brusic V."/>
            <person name="Quackenbush J."/>
            <person name="Wahlestedt C."/>
            <person name="Mattick J.S."/>
            <person name="Hume D.A."/>
            <person name="Kai C."/>
            <person name="Sasaki D."/>
            <person name="Tomaru Y."/>
            <person name="Fukuda S."/>
            <person name="Kanamori-Katayama M."/>
            <person name="Suzuki M."/>
            <person name="Aoki J."/>
            <person name="Arakawa T."/>
            <person name="Iida J."/>
            <person name="Imamura K."/>
            <person name="Itoh M."/>
            <person name="Kato T."/>
            <person name="Kawaji H."/>
            <person name="Kawagashira N."/>
            <person name="Kawashima T."/>
            <person name="Kojima M."/>
            <person name="Kondo S."/>
            <person name="Konno H."/>
            <person name="Nakano K."/>
            <person name="Ninomiya N."/>
            <person name="Nishio T."/>
            <person name="Okada M."/>
            <person name="Plessy C."/>
            <person name="Shibata K."/>
            <person name="Shiraki T."/>
            <person name="Suzuki S."/>
            <person name="Tagami M."/>
            <person name="Waki K."/>
            <person name="Watahiki A."/>
            <person name="Okamura-Oho Y."/>
            <person name="Suzuki H."/>
            <person name="Kawai J."/>
            <person name="Hayashizaki Y."/>
        </authorList>
    </citation>
    <scope>NUCLEOTIDE SEQUENCE [LARGE SCALE MRNA]</scope>
    <source>
        <strain>C57BL/6J</strain>
        <tissue>Lung</tissue>
        <tissue>Testis</tissue>
    </source>
</reference>
<reference key="3">
    <citation type="journal article" date="2009" name="PLoS Biol.">
        <title>Lineage-specific biology revealed by a finished genome assembly of the mouse.</title>
        <authorList>
            <person name="Church D.M."/>
            <person name="Goodstadt L."/>
            <person name="Hillier L.W."/>
            <person name="Zody M.C."/>
            <person name="Goldstein S."/>
            <person name="She X."/>
            <person name="Bult C.J."/>
            <person name="Agarwala R."/>
            <person name="Cherry J.L."/>
            <person name="DiCuccio M."/>
            <person name="Hlavina W."/>
            <person name="Kapustin Y."/>
            <person name="Meric P."/>
            <person name="Maglott D."/>
            <person name="Birtle Z."/>
            <person name="Marques A.C."/>
            <person name="Graves T."/>
            <person name="Zhou S."/>
            <person name="Teague B."/>
            <person name="Potamousis K."/>
            <person name="Churas C."/>
            <person name="Place M."/>
            <person name="Herschleb J."/>
            <person name="Runnheim R."/>
            <person name="Forrest D."/>
            <person name="Amos-Landgraf J."/>
            <person name="Schwartz D.C."/>
            <person name="Cheng Z."/>
            <person name="Lindblad-Toh K."/>
            <person name="Eichler E.E."/>
            <person name="Ponting C.P."/>
        </authorList>
    </citation>
    <scope>NUCLEOTIDE SEQUENCE [LARGE SCALE GENOMIC DNA]</scope>
    <source>
        <strain>C57BL/6J</strain>
    </source>
</reference>
<reference key="4">
    <citation type="journal article" date="2004" name="Genome Res.">
        <title>The status, quality, and expansion of the NIH full-length cDNA project: the Mammalian Gene Collection (MGC).</title>
        <authorList>
            <consortium name="The MGC Project Team"/>
        </authorList>
    </citation>
    <scope>NUCLEOTIDE SEQUENCE [LARGE SCALE MRNA]</scope>
    <source>
        <tissue>Kidney</tissue>
    </source>
</reference>
<reference key="5">
    <citation type="journal article" date="1989" name="EMBO J.">
        <title>Two gene members of the murine HOX-5 complex show regional and cell-type specific expression in developing limbs and gonads.</title>
        <authorList>
            <person name="Dolle P."/>
            <person name="Duboule D."/>
        </authorList>
    </citation>
    <scope>NUCLEOTIDE SEQUENCE OF 272-331</scope>
</reference>
<reference key="6">
    <citation type="journal article" date="1989" name="EMBO J.">
        <title>The structural and functional organization of the murine HOX gene family resembles that of Drosophila homeotic genes.</title>
        <authorList>
            <person name="Duboule D."/>
            <person name="Dolle P."/>
        </authorList>
    </citation>
    <scope>NUCLEOTIDE SEQUENCE [GENOMIC DNA] OF 272-331</scope>
    <scope>DEVELOPMENTAL STAGE</scope>
</reference>
<organism>
    <name type="scientific">Mus musculus</name>
    <name type="common">Mouse</name>
    <dbReference type="NCBI Taxonomy" id="10090"/>
    <lineage>
        <taxon>Eukaryota</taxon>
        <taxon>Metazoa</taxon>
        <taxon>Chordata</taxon>
        <taxon>Craniata</taxon>
        <taxon>Vertebrata</taxon>
        <taxon>Euteleostomi</taxon>
        <taxon>Mammalia</taxon>
        <taxon>Eutheria</taxon>
        <taxon>Euarchontoglires</taxon>
        <taxon>Glires</taxon>
        <taxon>Rodentia</taxon>
        <taxon>Myomorpha</taxon>
        <taxon>Muroidea</taxon>
        <taxon>Muridae</taxon>
        <taxon>Murinae</taxon>
        <taxon>Mus</taxon>
        <taxon>Mus</taxon>
    </lineage>
</organism>
<sequence>MSSSGTLSNYYVDSLIGHEGDEVFAARFGPPGPGTQGRPAGVADGPAAATAEFASCSFAPKSSVFSASWSAVAAQPPAAATMSGLYHPYVSPPPLAAAEPGRYVRSWMEPLPGFPGGAGGGGGSGGGGGGGPGPVPSPGGPANGRHYGIKPETGAAPAPAAASTSSSSSTSSSSSSKRTECSAARESQGSGGPEFPCNSFLRDKAAAATGNGPGVGIGTGPGAVGSSEPSACSDHPSPGCSLKEEEKQPPQPPQQQLDPNNPAANWIHARSTRKKRCPYTKYQTLELEKEFLFNMYLTRDRRYEVARILNLTERQVKIWFQNRRMKMKKMSKEKCPKGD</sequence>
<name>HXD9_MOUSE</name>
<gene>
    <name type="primary">Hoxd9</name>
    <name type="synonym">Hox-4.4</name>
    <name type="synonym">Hoxd-9</name>
</gene>
<protein>
    <recommendedName>
        <fullName>Homeobox protein Hox-D9</fullName>
    </recommendedName>
    <alternativeName>
        <fullName>Homeobox protein Hox-4.4</fullName>
    </alternativeName>
    <alternativeName>
        <fullName>Homeobox protein Hox-5.2</fullName>
    </alternativeName>
</protein>